<organism>
    <name type="scientific">Drosophila melanogaster</name>
    <name type="common">Fruit fly</name>
    <dbReference type="NCBI Taxonomy" id="7227"/>
    <lineage>
        <taxon>Eukaryota</taxon>
        <taxon>Metazoa</taxon>
        <taxon>Ecdysozoa</taxon>
        <taxon>Arthropoda</taxon>
        <taxon>Hexapoda</taxon>
        <taxon>Insecta</taxon>
        <taxon>Pterygota</taxon>
        <taxon>Neoptera</taxon>
        <taxon>Endopterygota</taxon>
        <taxon>Diptera</taxon>
        <taxon>Brachycera</taxon>
        <taxon>Muscomorpha</taxon>
        <taxon>Ephydroidea</taxon>
        <taxon>Drosophilidae</taxon>
        <taxon>Drosophila</taxon>
        <taxon>Sophophora</taxon>
    </lineage>
</organism>
<accession>O76454</accession>
<accession>C6SV03</accession>
<proteinExistence type="evidence at protein level"/>
<comment type="catalytic activity">
    <reaction evidence="1">
        <text>(4aS,6R)-4a-hydroxy-L-erythro-5,6,7,8-tetrahydrobiopterin = (6R)-L-erythro-6,7-dihydrobiopterin + H2O</text>
        <dbReference type="Rhea" id="RHEA:11920"/>
        <dbReference type="ChEBI" id="CHEBI:15377"/>
        <dbReference type="ChEBI" id="CHEBI:15642"/>
        <dbReference type="ChEBI" id="CHEBI:43120"/>
        <dbReference type="EC" id="4.2.1.96"/>
    </reaction>
</comment>
<comment type="similarity">
    <text evidence="2">Belongs to the pterin-4-alpha-carbinolamine dehydratase family.</text>
</comment>
<comment type="sequence caution" evidence="2">
    <conflict type="erroneous gene model prediction">
        <sequence resource="EMBL-CDS" id="AAC25196"/>
    </conflict>
</comment>
<comment type="sequence caution" evidence="2">
    <conflict type="erroneous initiation">
        <sequence resource="EMBL-CDS" id="AAM50917"/>
    </conflict>
</comment>
<dbReference type="EC" id="4.2.1.96"/>
<dbReference type="EMBL" id="AF069297">
    <property type="protein sequence ID" value="AAC25196.1"/>
    <property type="status" value="ALT_SEQ"/>
    <property type="molecule type" value="Genomic_DNA"/>
</dbReference>
<dbReference type="EMBL" id="AE014297">
    <property type="protein sequence ID" value="AAF56923.2"/>
    <property type="molecule type" value="Genomic_DNA"/>
</dbReference>
<dbReference type="EMBL" id="BT088995">
    <property type="protein sequence ID" value="ACT88136.1"/>
    <property type="molecule type" value="mRNA"/>
</dbReference>
<dbReference type="EMBL" id="AY119057">
    <property type="protein sequence ID" value="AAM50917.1"/>
    <property type="status" value="ALT_INIT"/>
    <property type="molecule type" value="mRNA"/>
</dbReference>
<dbReference type="RefSeq" id="NP_477360.2">
    <property type="nucleotide sequence ID" value="NM_058012.4"/>
</dbReference>
<dbReference type="SMR" id="O76454"/>
<dbReference type="BioGRID" id="68363">
    <property type="interactions" value="4"/>
</dbReference>
<dbReference type="DIP" id="DIP-22629N"/>
<dbReference type="FunCoup" id="O76454">
    <property type="interactions" value="71"/>
</dbReference>
<dbReference type="IntAct" id="O76454">
    <property type="interactions" value="10"/>
</dbReference>
<dbReference type="STRING" id="7227.FBpp0084824"/>
<dbReference type="PaxDb" id="7227-FBpp0084824"/>
<dbReference type="DNASU" id="43499"/>
<dbReference type="EnsemblMetazoa" id="FBtr0085458">
    <property type="protein sequence ID" value="FBpp0084824"/>
    <property type="gene ID" value="FBgn0024841"/>
</dbReference>
<dbReference type="GeneID" id="43499"/>
<dbReference type="KEGG" id="dme:Dmel_CG1963"/>
<dbReference type="AGR" id="FB:FBgn0024841"/>
<dbReference type="CTD" id="43499"/>
<dbReference type="FlyBase" id="FBgn0024841">
    <property type="gene designation" value="Pcd"/>
</dbReference>
<dbReference type="VEuPathDB" id="VectorBase:FBgn0024841"/>
<dbReference type="eggNOG" id="KOG4073">
    <property type="taxonomic scope" value="Eukaryota"/>
</dbReference>
<dbReference type="GeneTree" id="ENSGT00390000007221"/>
<dbReference type="HOGENOM" id="CLU_123007_0_0_1"/>
<dbReference type="InParanoid" id="O76454"/>
<dbReference type="OMA" id="RYASSVF"/>
<dbReference type="OrthoDB" id="277398at2759"/>
<dbReference type="PhylomeDB" id="O76454"/>
<dbReference type="Reactome" id="R-DME-8964208">
    <property type="pathway name" value="Phenylalanine metabolism"/>
</dbReference>
<dbReference type="BioGRID-ORCS" id="43499">
    <property type="hits" value="0 hits in 3 CRISPR screens"/>
</dbReference>
<dbReference type="GenomeRNAi" id="43499"/>
<dbReference type="PRO" id="PR:O76454"/>
<dbReference type="Proteomes" id="UP000000803">
    <property type="component" value="Chromosome 3R"/>
</dbReference>
<dbReference type="Bgee" id="FBgn0024841">
    <property type="expression patterns" value="Expressed in adult CCAP neuron in brain and 195 other cell types or tissues"/>
</dbReference>
<dbReference type="GO" id="GO:0005739">
    <property type="term" value="C:mitochondrion"/>
    <property type="evidence" value="ECO:0000250"/>
    <property type="project" value="FlyBase"/>
</dbReference>
<dbReference type="GO" id="GO:0008124">
    <property type="term" value="F:4-alpha-hydroxytetrahydrobiopterin dehydratase activity"/>
    <property type="evidence" value="ECO:0000318"/>
    <property type="project" value="GO_Central"/>
</dbReference>
<dbReference type="GO" id="GO:0006729">
    <property type="term" value="P:tetrahydrobiopterin biosynthetic process"/>
    <property type="evidence" value="ECO:0007669"/>
    <property type="project" value="InterPro"/>
</dbReference>
<dbReference type="CDD" id="cd00914">
    <property type="entry name" value="PCD_DCoH_subfamily_b"/>
    <property type="match status" value="1"/>
</dbReference>
<dbReference type="Gene3D" id="3.30.1360.20">
    <property type="entry name" value="Transcriptional coactivator/pterin dehydratase"/>
    <property type="match status" value="1"/>
</dbReference>
<dbReference type="HAMAP" id="MF_00434">
    <property type="entry name" value="Pterin_4_alpha"/>
    <property type="match status" value="1"/>
</dbReference>
<dbReference type="InterPro" id="IPR036428">
    <property type="entry name" value="PCD_sf"/>
</dbReference>
<dbReference type="InterPro" id="IPR001533">
    <property type="entry name" value="Pterin_deHydtase"/>
</dbReference>
<dbReference type="NCBIfam" id="NF002018">
    <property type="entry name" value="PRK00823.1-3"/>
    <property type="match status" value="1"/>
</dbReference>
<dbReference type="PANTHER" id="PTHR12599">
    <property type="entry name" value="PTERIN-4-ALPHA-CARBINOLAMINE DEHYDRATASE"/>
    <property type="match status" value="1"/>
</dbReference>
<dbReference type="PANTHER" id="PTHR12599:SF0">
    <property type="entry name" value="PTERIN-4-ALPHA-CARBINOLAMINE DEHYDRATASE"/>
    <property type="match status" value="1"/>
</dbReference>
<dbReference type="Pfam" id="PF01329">
    <property type="entry name" value="Pterin_4a"/>
    <property type="match status" value="1"/>
</dbReference>
<dbReference type="SUPFAM" id="SSF55248">
    <property type="entry name" value="PCD-like"/>
    <property type="match status" value="1"/>
</dbReference>
<keyword id="KW-0456">Lyase</keyword>
<keyword id="KW-1185">Reference proteome</keyword>
<feature type="chain" id="PRO_0000063061" description="Pterin-4-alpha-carbinolamine dehydratase">
    <location>
        <begin position="1"/>
        <end position="192"/>
    </location>
</feature>
<protein>
    <recommendedName>
        <fullName>Pterin-4-alpha-carbinolamine dehydratase</fullName>
        <shortName>PHS</shortName>
        <ecNumber>4.2.1.96</ecNumber>
    </recommendedName>
    <alternativeName>
        <fullName>4-alpha-hydroxy-tetrahydropterin dehydratase</fullName>
    </alternativeName>
    <alternativeName>
        <fullName>Pterin carbinolamine dehydratase</fullName>
        <shortName>PCD</shortName>
    </alternativeName>
</protein>
<gene>
    <name type="primary">Pcd</name>
    <name type="ORF">CG1963</name>
</gene>
<reference key="1">
    <citation type="journal article" date="1998" name="Biochim. Biophys. Acta">
        <title>Molecular characterization of the Drosophila melanogaster gene encoding the pterin 4alpha-carbinolamine dehydratase.</title>
        <authorList>
            <person name="Seong C."/>
            <person name="Jeong S."/>
            <person name="Park D."/>
            <person name="Yoon J."/>
            <person name="Oh Y."/>
            <person name="Yim J."/>
            <person name="Han K."/>
            <person name="Baek K."/>
        </authorList>
    </citation>
    <scope>NUCLEOTIDE SEQUENCE [GENOMIC DNA]</scope>
    <scope>CATALYTIC ACTIVITY</scope>
    <source>
        <tissue>Head</tissue>
    </source>
</reference>
<reference key="2">
    <citation type="journal article" date="2000" name="Science">
        <title>The genome sequence of Drosophila melanogaster.</title>
        <authorList>
            <person name="Adams M.D."/>
            <person name="Celniker S.E."/>
            <person name="Holt R.A."/>
            <person name="Evans C.A."/>
            <person name="Gocayne J.D."/>
            <person name="Amanatides P.G."/>
            <person name="Scherer S.E."/>
            <person name="Li P.W."/>
            <person name="Hoskins R.A."/>
            <person name="Galle R.F."/>
            <person name="George R.A."/>
            <person name="Lewis S.E."/>
            <person name="Richards S."/>
            <person name="Ashburner M."/>
            <person name="Henderson S.N."/>
            <person name="Sutton G.G."/>
            <person name="Wortman J.R."/>
            <person name="Yandell M.D."/>
            <person name="Zhang Q."/>
            <person name="Chen L.X."/>
            <person name="Brandon R.C."/>
            <person name="Rogers Y.-H.C."/>
            <person name="Blazej R.G."/>
            <person name="Champe M."/>
            <person name="Pfeiffer B.D."/>
            <person name="Wan K.H."/>
            <person name="Doyle C."/>
            <person name="Baxter E.G."/>
            <person name="Helt G."/>
            <person name="Nelson C.R."/>
            <person name="Miklos G.L.G."/>
            <person name="Abril J.F."/>
            <person name="Agbayani A."/>
            <person name="An H.-J."/>
            <person name="Andrews-Pfannkoch C."/>
            <person name="Baldwin D."/>
            <person name="Ballew R.M."/>
            <person name="Basu A."/>
            <person name="Baxendale J."/>
            <person name="Bayraktaroglu L."/>
            <person name="Beasley E.M."/>
            <person name="Beeson K.Y."/>
            <person name="Benos P.V."/>
            <person name="Berman B.P."/>
            <person name="Bhandari D."/>
            <person name="Bolshakov S."/>
            <person name="Borkova D."/>
            <person name="Botchan M.R."/>
            <person name="Bouck J."/>
            <person name="Brokstein P."/>
            <person name="Brottier P."/>
            <person name="Burtis K.C."/>
            <person name="Busam D.A."/>
            <person name="Butler H."/>
            <person name="Cadieu E."/>
            <person name="Center A."/>
            <person name="Chandra I."/>
            <person name="Cherry J.M."/>
            <person name="Cawley S."/>
            <person name="Dahlke C."/>
            <person name="Davenport L.B."/>
            <person name="Davies P."/>
            <person name="de Pablos B."/>
            <person name="Delcher A."/>
            <person name="Deng Z."/>
            <person name="Mays A.D."/>
            <person name="Dew I."/>
            <person name="Dietz S.M."/>
            <person name="Dodson K."/>
            <person name="Doup L.E."/>
            <person name="Downes M."/>
            <person name="Dugan-Rocha S."/>
            <person name="Dunkov B.C."/>
            <person name="Dunn P."/>
            <person name="Durbin K.J."/>
            <person name="Evangelista C.C."/>
            <person name="Ferraz C."/>
            <person name="Ferriera S."/>
            <person name="Fleischmann W."/>
            <person name="Fosler C."/>
            <person name="Gabrielian A.E."/>
            <person name="Garg N.S."/>
            <person name="Gelbart W.M."/>
            <person name="Glasser K."/>
            <person name="Glodek A."/>
            <person name="Gong F."/>
            <person name="Gorrell J.H."/>
            <person name="Gu Z."/>
            <person name="Guan P."/>
            <person name="Harris M."/>
            <person name="Harris N.L."/>
            <person name="Harvey D.A."/>
            <person name="Heiman T.J."/>
            <person name="Hernandez J.R."/>
            <person name="Houck J."/>
            <person name="Hostin D."/>
            <person name="Houston K.A."/>
            <person name="Howland T.J."/>
            <person name="Wei M.-H."/>
            <person name="Ibegwam C."/>
            <person name="Jalali M."/>
            <person name="Kalush F."/>
            <person name="Karpen G.H."/>
            <person name="Ke Z."/>
            <person name="Kennison J.A."/>
            <person name="Ketchum K.A."/>
            <person name="Kimmel B.E."/>
            <person name="Kodira C.D."/>
            <person name="Kraft C.L."/>
            <person name="Kravitz S."/>
            <person name="Kulp D."/>
            <person name="Lai Z."/>
            <person name="Lasko P."/>
            <person name="Lei Y."/>
            <person name="Levitsky A.A."/>
            <person name="Li J.H."/>
            <person name="Li Z."/>
            <person name="Liang Y."/>
            <person name="Lin X."/>
            <person name="Liu X."/>
            <person name="Mattei B."/>
            <person name="McIntosh T.C."/>
            <person name="McLeod M.P."/>
            <person name="McPherson D."/>
            <person name="Merkulov G."/>
            <person name="Milshina N.V."/>
            <person name="Mobarry C."/>
            <person name="Morris J."/>
            <person name="Moshrefi A."/>
            <person name="Mount S.M."/>
            <person name="Moy M."/>
            <person name="Murphy B."/>
            <person name="Murphy L."/>
            <person name="Muzny D.M."/>
            <person name="Nelson D.L."/>
            <person name="Nelson D.R."/>
            <person name="Nelson K.A."/>
            <person name="Nixon K."/>
            <person name="Nusskern D.R."/>
            <person name="Pacleb J.M."/>
            <person name="Palazzolo M."/>
            <person name="Pittman G.S."/>
            <person name="Pan S."/>
            <person name="Pollard J."/>
            <person name="Puri V."/>
            <person name="Reese M.G."/>
            <person name="Reinert K."/>
            <person name="Remington K."/>
            <person name="Saunders R.D.C."/>
            <person name="Scheeler F."/>
            <person name="Shen H."/>
            <person name="Shue B.C."/>
            <person name="Siden-Kiamos I."/>
            <person name="Simpson M."/>
            <person name="Skupski M.P."/>
            <person name="Smith T.J."/>
            <person name="Spier E."/>
            <person name="Spradling A.C."/>
            <person name="Stapleton M."/>
            <person name="Strong R."/>
            <person name="Sun E."/>
            <person name="Svirskas R."/>
            <person name="Tector C."/>
            <person name="Turner R."/>
            <person name="Venter E."/>
            <person name="Wang A.H."/>
            <person name="Wang X."/>
            <person name="Wang Z.-Y."/>
            <person name="Wassarman D.A."/>
            <person name="Weinstock G.M."/>
            <person name="Weissenbach J."/>
            <person name="Williams S.M."/>
            <person name="Woodage T."/>
            <person name="Worley K.C."/>
            <person name="Wu D."/>
            <person name="Yang S."/>
            <person name="Yao Q.A."/>
            <person name="Ye J."/>
            <person name="Yeh R.-F."/>
            <person name="Zaveri J.S."/>
            <person name="Zhan M."/>
            <person name="Zhang G."/>
            <person name="Zhao Q."/>
            <person name="Zheng L."/>
            <person name="Zheng X.H."/>
            <person name="Zhong F.N."/>
            <person name="Zhong W."/>
            <person name="Zhou X."/>
            <person name="Zhu S.C."/>
            <person name="Zhu X."/>
            <person name="Smith H.O."/>
            <person name="Gibbs R.A."/>
            <person name="Myers E.W."/>
            <person name="Rubin G.M."/>
            <person name="Venter J.C."/>
        </authorList>
    </citation>
    <scope>NUCLEOTIDE SEQUENCE [LARGE SCALE GENOMIC DNA]</scope>
    <source>
        <strain>Berkeley</strain>
    </source>
</reference>
<reference key="3">
    <citation type="journal article" date="2002" name="Genome Biol.">
        <title>Annotation of the Drosophila melanogaster euchromatic genome: a systematic review.</title>
        <authorList>
            <person name="Misra S."/>
            <person name="Crosby M.A."/>
            <person name="Mungall C.J."/>
            <person name="Matthews B.B."/>
            <person name="Campbell K.S."/>
            <person name="Hradecky P."/>
            <person name="Huang Y."/>
            <person name="Kaminker J.S."/>
            <person name="Millburn G.H."/>
            <person name="Prochnik S.E."/>
            <person name="Smith C.D."/>
            <person name="Tupy J.L."/>
            <person name="Whitfield E.J."/>
            <person name="Bayraktaroglu L."/>
            <person name="Berman B.P."/>
            <person name="Bettencourt B.R."/>
            <person name="Celniker S.E."/>
            <person name="de Grey A.D.N.J."/>
            <person name="Drysdale R.A."/>
            <person name="Harris N.L."/>
            <person name="Richter J."/>
            <person name="Russo S."/>
            <person name="Schroeder A.J."/>
            <person name="Shu S.Q."/>
            <person name="Stapleton M."/>
            <person name="Yamada C."/>
            <person name="Ashburner M."/>
            <person name="Gelbart W.M."/>
            <person name="Rubin G.M."/>
            <person name="Lewis S.E."/>
        </authorList>
    </citation>
    <scope>GENOME REANNOTATION</scope>
    <source>
        <strain>Berkeley</strain>
    </source>
</reference>
<reference key="4">
    <citation type="submission" date="2009-07" db="EMBL/GenBank/DDBJ databases">
        <authorList>
            <person name="Carlson J.W."/>
            <person name="Booth B."/>
            <person name="Frise E."/>
            <person name="Park S."/>
            <person name="Wan K.H."/>
            <person name="Yu C."/>
            <person name="Celniker S.E."/>
        </authorList>
    </citation>
    <scope>NUCLEOTIDE SEQUENCE [LARGE SCALE MRNA]</scope>
    <source>
        <strain>Berkeley</strain>
        <tissue>Head</tissue>
    </source>
</reference>
<reference key="5">
    <citation type="journal article" date="2002" name="Genome Biol.">
        <title>A Drosophila full-length cDNA resource.</title>
        <authorList>
            <person name="Stapleton M."/>
            <person name="Carlson J.W."/>
            <person name="Brokstein P."/>
            <person name="Yu C."/>
            <person name="Champe M."/>
            <person name="George R.A."/>
            <person name="Guarin H."/>
            <person name="Kronmiller B."/>
            <person name="Pacleb J.M."/>
            <person name="Park S."/>
            <person name="Wan K.H."/>
            <person name="Rubin G.M."/>
            <person name="Celniker S.E."/>
        </authorList>
    </citation>
    <scope>NUCLEOTIDE SEQUENCE [LARGE SCALE MRNA] OF 37-192</scope>
    <source>
        <strain>Berkeley</strain>
        <tissue>Larva</tissue>
        <tissue>Pupae</tissue>
    </source>
</reference>
<name>PHS_DROME</name>
<evidence type="ECO:0000269" key="1">
    <source>
    </source>
</evidence>
<evidence type="ECO:0000305" key="2"/>
<sequence>MLLTIKCAQNVIKPNCQKVANLLASSRRAGLFPTTATTATSRSLSQISVLYSPAAREAARAATGGSANLRRIHNTPTTEATATAITAKKRKMVVRLNEQERAEKLQPLLDAGWTLVEGRDAIFKQFVLKDFNQAFSFMTGVALLAEKINHHPEWFNCYNKVDVTLSTHDVGGLSSQDIRMATHLETTANLLK</sequence>